<proteinExistence type="inferred from homology"/>
<evidence type="ECO:0000255" key="1">
    <source>
        <dbReference type="HAMAP-Rule" id="MF_00175"/>
    </source>
</evidence>
<evidence type="ECO:0000255" key="2">
    <source>
        <dbReference type="PROSITE-ProRule" id="PRU01250"/>
    </source>
</evidence>
<protein>
    <recommendedName>
        <fullName evidence="1">ATP-dependent Clp protease ATP-binding subunit ClpX</fullName>
    </recommendedName>
</protein>
<reference key="1">
    <citation type="journal article" date="2008" name="PLoS ONE">
        <title>Genome sequence of Brucella abortus vaccine strain S19 compared to virulent strains yields candidate virulence genes.</title>
        <authorList>
            <person name="Crasta O.R."/>
            <person name="Folkerts O."/>
            <person name="Fei Z."/>
            <person name="Mane S.P."/>
            <person name="Evans C."/>
            <person name="Martino-Catt S."/>
            <person name="Bricker B."/>
            <person name="Yu G."/>
            <person name="Du L."/>
            <person name="Sobral B.W."/>
        </authorList>
    </citation>
    <scope>NUCLEOTIDE SEQUENCE [LARGE SCALE GENOMIC DNA]</scope>
    <source>
        <strain>S19</strain>
    </source>
</reference>
<keyword id="KW-0067">ATP-binding</keyword>
<keyword id="KW-0143">Chaperone</keyword>
<keyword id="KW-0479">Metal-binding</keyword>
<keyword id="KW-0547">Nucleotide-binding</keyword>
<keyword id="KW-0862">Zinc</keyword>
<dbReference type="EMBL" id="CP000887">
    <property type="protein sequence ID" value="ACD72557.1"/>
    <property type="molecule type" value="Genomic_DNA"/>
</dbReference>
<dbReference type="RefSeq" id="WP_002969547.1">
    <property type="nucleotide sequence ID" value="NC_010742.1"/>
</dbReference>
<dbReference type="SMR" id="B2S5W0"/>
<dbReference type="KEGG" id="bmc:BAbS19_I10500"/>
<dbReference type="HOGENOM" id="CLU_014218_8_2_5"/>
<dbReference type="Proteomes" id="UP000002565">
    <property type="component" value="Chromosome 1"/>
</dbReference>
<dbReference type="GO" id="GO:0009376">
    <property type="term" value="C:HslUV protease complex"/>
    <property type="evidence" value="ECO:0007669"/>
    <property type="project" value="TreeGrafter"/>
</dbReference>
<dbReference type="GO" id="GO:0005524">
    <property type="term" value="F:ATP binding"/>
    <property type="evidence" value="ECO:0007669"/>
    <property type="project" value="UniProtKB-UniRule"/>
</dbReference>
<dbReference type="GO" id="GO:0016887">
    <property type="term" value="F:ATP hydrolysis activity"/>
    <property type="evidence" value="ECO:0007669"/>
    <property type="project" value="InterPro"/>
</dbReference>
<dbReference type="GO" id="GO:0140662">
    <property type="term" value="F:ATP-dependent protein folding chaperone"/>
    <property type="evidence" value="ECO:0007669"/>
    <property type="project" value="InterPro"/>
</dbReference>
<dbReference type="GO" id="GO:0046983">
    <property type="term" value="F:protein dimerization activity"/>
    <property type="evidence" value="ECO:0007669"/>
    <property type="project" value="InterPro"/>
</dbReference>
<dbReference type="GO" id="GO:0051082">
    <property type="term" value="F:unfolded protein binding"/>
    <property type="evidence" value="ECO:0007669"/>
    <property type="project" value="UniProtKB-UniRule"/>
</dbReference>
<dbReference type="GO" id="GO:0008270">
    <property type="term" value="F:zinc ion binding"/>
    <property type="evidence" value="ECO:0007669"/>
    <property type="project" value="InterPro"/>
</dbReference>
<dbReference type="GO" id="GO:0051301">
    <property type="term" value="P:cell division"/>
    <property type="evidence" value="ECO:0007669"/>
    <property type="project" value="TreeGrafter"/>
</dbReference>
<dbReference type="GO" id="GO:0051603">
    <property type="term" value="P:proteolysis involved in protein catabolic process"/>
    <property type="evidence" value="ECO:0007669"/>
    <property type="project" value="TreeGrafter"/>
</dbReference>
<dbReference type="CDD" id="cd19497">
    <property type="entry name" value="RecA-like_ClpX"/>
    <property type="match status" value="1"/>
</dbReference>
<dbReference type="FunFam" id="1.10.8.60:FF:000002">
    <property type="entry name" value="ATP-dependent Clp protease ATP-binding subunit ClpX"/>
    <property type="match status" value="1"/>
</dbReference>
<dbReference type="FunFam" id="3.40.50.300:FF:000005">
    <property type="entry name" value="ATP-dependent Clp protease ATP-binding subunit ClpX"/>
    <property type="match status" value="1"/>
</dbReference>
<dbReference type="Gene3D" id="1.10.8.60">
    <property type="match status" value="1"/>
</dbReference>
<dbReference type="Gene3D" id="6.20.220.10">
    <property type="entry name" value="ClpX chaperone, C4-type zinc finger domain"/>
    <property type="match status" value="1"/>
</dbReference>
<dbReference type="Gene3D" id="3.40.50.300">
    <property type="entry name" value="P-loop containing nucleotide triphosphate hydrolases"/>
    <property type="match status" value="1"/>
</dbReference>
<dbReference type="HAMAP" id="MF_00175">
    <property type="entry name" value="ClpX"/>
    <property type="match status" value="1"/>
</dbReference>
<dbReference type="InterPro" id="IPR003593">
    <property type="entry name" value="AAA+_ATPase"/>
</dbReference>
<dbReference type="InterPro" id="IPR050052">
    <property type="entry name" value="ATP-dep_Clp_protease_ClpX"/>
</dbReference>
<dbReference type="InterPro" id="IPR003959">
    <property type="entry name" value="ATPase_AAA_core"/>
</dbReference>
<dbReference type="InterPro" id="IPR019489">
    <property type="entry name" value="Clp_ATPase_C"/>
</dbReference>
<dbReference type="InterPro" id="IPR004487">
    <property type="entry name" value="Clp_protease_ATP-bd_su_ClpX"/>
</dbReference>
<dbReference type="InterPro" id="IPR046425">
    <property type="entry name" value="ClpX_bact"/>
</dbReference>
<dbReference type="InterPro" id="IPR027417">
    <property type="entry name" value="P-loop_NTPase"/>
</dbReference>
<dbReference type="InterPro" id="IPR010603">
    <property type="entry name" value="Znf_CppX_C4"/>
</dbReference>
<dbReference type="InterPro" id="IPR038366">
    <property type="entry name" value="Znf_CppX_C4_sf"/>
</dbReference>
<dbReference type="NCBIfam" id="TIGR00382">
    <property type="entry name" value="clpX"/>
    <property type="match status" value="1"/>
</dbReference>
<dbReference type="NCBIfam" id="NF003745">
    <property type="entry name" value="PRK05342.1"/>
    <property type="match status" value="1"/>
</dbReference>
<dbReference type="PANTHER" id="PTHR48102:SF7">
    <property type="entry name" value="ATP-DEPENDENT CLP PROTEASE ATP-BINDING SUBUNIT CLPX-LIKE, MITOCHONDRIAL"/>
    <property type="match status" value="1"/>
</dbReference>
<dbReference type="PANTHER" id="PTHR48102">
    <property type="entry name" value="ATP-DEPENDENT CLP PROTEASE ATP-BINDING SUBUNIT CLPX-LIKE, MITOCHONDRIAL-RELATED"/>
    <property type="match status" value="1"/>
</dbReference>
<dbReference type="Pfam" id="PF07724">
    <property type="entry name" value="AAA_2"/>
    <property type="match status" value="1"/>
</dbReference>
<dbReference type="Pfam" id="PF10431">
    <property type="entry name" value="ClpB_D2-small"/>
    <property type="match status" value="1"/>
</dbReference>
<dbReference type="Pfam" id="PF06689">
    <property type="entry name" value="zf-C4_ClpX"/>
    <property type="match status" value="1"/>
</dbReference>
<dbReference type="SMART" id="SM00382">
    <property type="entry name" value="AAA"/>
    <property type="match status" value="1"/>
</dbReference>
<dbReference type="SMART" id="SM01086">
    <property type="entry name" value="ClpB_D2-small"/>
    <property type="match status" value="1"/>
</dbReference>
<dbReference type="SMART" id="SM00994">
    <property type="entry name" value="zf-C4_ClpX"/>
    <property type="match status" value="1"/>
</dbReference>
<dbReference type="SUPFAM" id="SSF57716">
    <property type="entry name" value="Glucocorticoid receptor-like (DNA-binding domain)"/>
    <property type="match status" value="1"/>
</dbReference>
<dbReference type="SUPFAM" id="SSF52540">
    <property type="entry name" value="P-loop containing nucleoside triphosphate hydrolases"/>
    <property type="match status" value="1"/>
</dbReference>
<dbReference type="PROSITE" id="PS51902">
    <property type="entry name" value="CLPX_ZB"/>
    <property type="match status" value="1"/>
</dbReference>
<organism>
    <name type="scientific">Brucella abortus (strain S19)</name>
    <dbReference type="NCBI Taxonomy" id="430066"/>
    <lineage>
        <taxon>Bacteria</taxon>
        <taxon>Pseudomonadati</taxon>
        <taxon>Pseudomonadota</taxon>
        <taxon>Alphaproteobacteria</taxon>
        <taxon>Hyphomicrobiales</taxon>
        <taxon>Brucellaceae</taxon>
        <taxon>Brucella/Ochrobactrum group</taxon>
        <taxon>Brucella</taxon>
    </lineage>
</organism>
<sequence>MSKVSNGGGDSKNTLYCSFCGKSQHEVRKLIAGPTVFICDECVELCMDIIREENKSSMVKSREGVPTPQEIMAVLDDYVIGQKDAKRVLSVAVHNHYKRLAHQSKNSDIELAKSNILLVGPTGCGKTYLAQTLARIIDVPFIMADATTLTQAGYVGEDVENIILKLLQAADYNVERAQRGIVYIDEVDKISRKSDNPSITRDVSGEGVQQALLKIMEGTVASVPPQGGRKHPQQEFLQVDTTNILFICGGAFAGLDRIISARGEKTSIGFGATVKSVDERRIGEVFKELEPEDLLKFGLIPEFVGRLPVIATLEDLDVDALVQILTEPKNALVKQYQRLFDMENVELVFHDDALRAIANKAVERKTGARGLRSIMEKILLDTMFELPTLEGVREVVISGDVVDGSARPLYIYAERQDEKGNVSA</sequence>
<name>CLPX_BRUA1</name>
<gene>
    <name evidence="1" type="primary">clpX</name>
    <name type="ordered locus">BAbS19_I10500</name>
</gene>
<feature type="chain" id="PRO_1000097926" description="ATP-dependent Clp protease ATP-binding subunit ClpX">
    <location>
        <begin position="1"/>
        <end position="424"/>
    </location>
</feature>
<feature type="domain" description="ClpX-type ZB" evidence="2">
    <location>
        <begin position="5"/>
        <end position="58"/>
    </location>
</feature>
<feature type="binding site" evidence="2">
    <location>
        <position position="17"/>
    </location>
    <ligand>
        <name>Zn(2+)</name>
        <dbReference type="ChEBI" id="CHEBI:29105"/>
    </ligand>
</feature>
<feature type="binding site" evidence="2">
    <location>
        <position position="20"/>
    </location>
    <ligand>
        <name>Zn(2+)</name>
        <dbReference type="ChEBI" id="CHEBI:29105"/>
    </ligand>
</feature>
<feature type="binding site" evidence="2">
    <location>
        <position position="39"/>
    </location>
    <ligand>
        <name>Zn(2+)</name>
        <dbReference type="ChEBI" id="CHEBI:29105"/>
    </ligand>
</feature>
<feature type="binding site" evidence="2">
    <location>
        <position position="42"/>
    </location>
    <ligand>
        <name>Zn(2+)</name>
        <dbReference type="ChEBI" id="CHEBI:29105"/>
    </ligand>
</feature>
<feature type="binding site" evidence="1">
    <location>
        <begin position="121"/>
        <end position="128"/>
    </location>
    <ligand>
        <name>ATP</name>
        <dbReference type="ChEBI" id="CHEBI:30616"/>
    </ligand>
</feature>
<comment type="function">
    <text evidence="1">ATP-dependent specificity component of the Clp protease. It directs the protease to specific substrates. Can perform chaperone functions in the absence of ClpP.</text>
</comment>
<comment type="subunit">
    <text evidence="1">Component of the ClpX-ClpP complex. Forms a hexameric ring that, in the presence of ATP, binds to fourteen ClpP subunits assembled into a disk-like structure with a central cavity, resembling the structure of eukaryotic proteasomes.</text>
</comment>
<comment type="similarity">
    <text evidence="1">Belongs to the ClpX chaperone family.</text>
</comment>
<accession>B2S5W0</accession>